<organism>
    <name type="scientific">Schizosaccharomyces pombe (strain 972 / ATCC 24843)</name>
    <name type="common">Fission yeast</name>
    <dbReference type="NCBI Taxonomy" id="284812"/>
    <lineage>
        <taxon>Eukaryota</taxon>
        <taxon>Fungi</taxon>
        <taxon>Dikarya</taxon>
        <taxon>Ascomycota</taxon>
        <taxon>Taphrinomycotina</taxon>
        <taxon>Schizosaccharomycetes</taxon>
        <taxon>Schizosaccharomycetales</taxon>
        <taxon>Schizosaccharomycetaceae</taxon>
        <taxon>Schizosaccharomyces</taxon>
    </lineage>
</organism>
<proteinExistence type="evidence at protein level"/>
<evidence type="ECO:0000256" key="1">
    <source>
        <dbReference type="SAM" id="MobiDB-lite"/>
    </source>
</evidence>
<evidence type="ECO:0000269" key="2">
    <source>
    </source>
</evidence>
<evidence type="ECO:0000269" key="3">
    <source>
    </source>
</evidence>
<evidence type="ECO:0000269" key="4">
    <source>
    </source>
</evidence>
<evidence type="ECO:0000269" key="5">
    <source>
    </source>
</evidence>
<evidence type="ECO:0000305" key="6"/>
<comment type="function">
    <text evidence="3">Has a role in meiosis.</text>
</comment>
<comment type="subcellular location">
    <subcellularLocation>
        <location evidence="2 4">Cytoplasm</location>
    </subcellularLocation>
    <text>Localizes at the cell tip and barrier septum.</text>
</comment>
<keyword id="KW-0963">Cytoplasm</keyword>
<keyword id="KW-0469">Meiosis</keyword>
<keyword id="KW-0597">Phosphoprotein</keyword>
<keyword id="KW-1185">Reference proteome</keyword>
<sequence>MSEEDTSKLRILSVGSNAISAFISWRLSESKACHTTLIWRNRCESVLSEGIRIRSSVFGSTKWKPDVVAPTVEQLAMNSEPFDYIFVCLKILPSVYNLDTAIKEVVTPGHTCIVLNTTGIVGAEKELQHAFPNNPVLSFVLPDQFAQRGPLQFEHTTFAADSAKSVIYVGLTEEEDDVPDSVQDAMIETLTLTLEAGGVSCDFLSKIQKKQWETGVGHMCFYPLSIINDEPNLALMYRLKSFAKVIDGLMDEAFSIAQAQGCEFEPEKLDVLKRHIVNRMLATPRPSYPYQDYIAHRPLEVAVLLGYPVEIAKELGVSVPRMETLLALFDAKNKRNLTVRAGTPQSSPNFNPAMRRSPVGAASRSPSRSTIGISNRIGSVDDLLNTRQFTSSPIGGSMPKGPNSIYKIPSASMVNLSSPLVTSPSGLNPTGRPSRFGGRVRGNPLTMNKAGSVSDLLSTSTNMASSDALETASMIGVPSAMPPNSFDMLTLTQRRNRRNNQSSSPPAPSDRRYTMGARRPVQTRGMTDSVIPILEDPMSTLYDTSRYPTRNSKPATPKASRPPSIASTVHRRMD</sequence>
<reference key="1">
    <citation type="journal article" date="2002" name="Nature">
        <title>The genome sequence of Schizosaccharomyces pombe.</title>
        <authorList>
            <person name="Wood V."/>
            <person name="Gwilliam R."/>
            <person name="Rajandream M.A."/>
            <person name="Lyne M.H."/>
            <person name="Lyne R."/>
            <person name="Stewart A."/>
            <person name="Sgouros J.G."/>
            <person name="Peat N."/>
            <person name="Hayles J."/>
            <person name="Baker S.G."/>
            <person name="Basham D."/>
            <person name="Bowman S."/>
            <person name="Brooks K."/>
            <person name="Brown D."/>
            <person name="Brown S."/>
            <person name="Chillingworth T."/>
            <person name="Churcher C.M."/>
            <person name="Collins M."/>
            <person name="Connor R."/>
            <person name="Cronin A."/>
            <person name="Davis P."/>
            <person name="Feltwell T."/>
            <person name="Fraser A."/>
            <person name="Gentles S."/>
            <person name="Goble A."/>
            <person name="Hamlin N."/>
            <person name="Harris D.E."/>
            <person name="Hidalgo J."/>
            <person name="Hodgson G."/>
            <person name="Holroyd S."/>
            <person name="Hornsby T."/>
            <person name="Howarth S."/>
            <person name="Huckle E.J."/>
            <person name="Hunt S."/>
            <person name="Jagels K."/>
            <person name="James K.D."/>
            <person name="Jones L."/>
            <person name="Jones M."/>
            <person name="Leather S."/>
            <person name="McDonald S."/>
            <person name="McLean J."/>
            <person name="Mooney P."/>
            <person name="Moule S."/>
            <person name="Mungall K.L."/>
            <person name="Murphy L.D."/>
            <person name="Niblett D."/>
            <person name="Odell C."/>
            <person name="Oliver K."/>
            <person name="O'Neil S."/>
            <person name="Pearson D."/>
            <person name="Quail M.A."/>
            <person name="Rabbinowitsch E."/>
            <person name="Rutherford K.M."/>
            <person name="Rutter S."/>
            <person name="Saunders D."/>
            <person name="Seeger K."/>
            <person name="Sharp S."/>
            <person name="Skelton J."/>
            <person name="Simmonds M.N."/>
            <person name="Squares R."/>
            <person name="Squares S."/>
            <person name="Stevens K."/>
            <person name="Taylor K."/>
            <person name="Taylor R.G."/>
            <person name="Tivey A."/>
            <person name="Walsh S.V."/>
            <person name="Warren T."/>
            <person name="Whitehead S."/>
            <person name="Woodward J.R."/>
            <person name="Volckaert G."/>
            <person name="Aert R."/>
            <person name="Robben J."/>
            <person name="Grymonprez B."/>
            <person name="Weltjens I."/>
            <person name="Vanstreels E."/>
            <person name="Rieger M."/>
            <person name="Schaefer M."/>
            <person name="Mueller-Auer S."/>
            <person name="Gabel C."/>
            <person name="Fuchs M."/>
            <person name="Duesterhoeft A."/>
            <person name="Fritzc C."/>
            <person name="Holzer E."/>
            <person name="Moestl D."/>
            <person name="Hilbert H."/>
            <person name="Borzym K."/>
            <person name="Langer I."/>
            <person name="Beck A."/>
            <person name="Lehrach H."/>
            <person name="Reinhardt R."/>
            <person name="Pohl T.M."/>
            <person name="Eger P."/>
            <person name="Zimmermann W."/>
            <person name="Wedler H."/>
            <person name="Wambutt R."/>
            <person name="Purnelle B."/>
            <person name="Goffeau A."/>
            <person name="Cadieu E."/>
            <person name="Dreano S."/>
            <person name="Gloux S."/>
            <person name="Lelaure V."/>
            <person name="Mottier S."/>
            <person name="Galibert F."/>
            <person name="Aves S.J."/>
            <person name="Xiang Z."/>
            <person name="Hunt C."/>
            <person name="Moore K."/>
            <person name="Hurst S.M."/>
            <person name="Lucas M."/>
            <person name="Rochet M."/>
            <person name="Gaillardin C."/>
            <person name="Tallada V.A."/>
            <person name="Garzon A."/>
            <person name="Thode G."/>
            <person name="Daga R.R."/>
            <person name="Cruzado L."/>
            <person name="Jimenez J."/>
            <person name="Sanchez M."/>
            <person name="del Rey F."/>
            <person name="Benito J."/>
            <person name="Dominguez A."/>
            <person name="Revuelta J.L."/>
            <person name="Moreno S."/>
            <person name="Armstrong J."/>
            <person name="Forsburg S.L."/>
            <person name="Cerutti L."/>
            <person name="Lowe T."/>
            <person name="McCombie W.R."/>
            <person name="Paulsen I."/>
            <person name="Potashkin J."/>
            <person name="Shpakovski G.V."/>
            <person name="Ussery D."/>
            <person name="Barrell B.G."/>
            <person name="Nurse P."/>
        </authorList>
    </citation>
    <scope>NUCLEOTIDE SEQUENCE [LARGE SCALE GENOMIC DNA]</scope>
    <source>
        <strain>972 / ATCC 24843</strain>
    </source>
</reference>
<reference key="2">
    <citation type="journal article" date="2000" name="Genes Cells">
        <title>Large-scale screening of intracellular protein localization in living fission yeast cells by the use of a GFP-fusion genomic DNA library.</title>
        <authorList>
            <person name="Ding D.-Q."/>
            <person name="Tomita Y."/>
            <person name="Yamamoto A."/>
            <person name="Chikashige Y."/>
            <person name="Haraguchi T."/>
            <person name="Hiraoka Y."/>
        </authorList>
    </citation>
    <scope>NUCLEOTIDE SEQUENCE [LARGE SCALE GENOMIC DNA] OF 357-536</scope>
    <scope>SUBCELLULAR LOCATION</scope>
    <source>
        <strain>ATCC 38364 / 968</strain>
    </source>
</reference>
<reference key="3">
    <citation type="journal article" date="2005" name="Curr. Biol.">
        <title>A large-scale screen in S. pombe identifies seven novel genes required for critical meiotic events.</title>
        <authorList>
            <person name="Martin-Castellanos C."/>
            <person name="Blanco M."/>
            <person name="Rozalen A.E."/>
            <person name="Perez-Hidalgo L."/>
            <person name="Garcia A.I."/>
            <person name="Conde F."/>
            <person name="Mata J."/>
            <person name="Ellermeier C."/>
            <person name="Davis L."/>
            <person name="San-Segundo P."/>
            <person name="Smith G.R."/>
            <person name="Moreno S."/>
        </authorList>
    </citation>
    <scope>FUNCTION IN MEIOSIS</scope>
</reference>
<reference key="4">
    <citation type="journal article" date="2006" name="Nat. Biotechnol.">
        <title>ORFeome cloning and global analysis of protein localization in the fission yeast Schizosaccharomyces pombe.</title>
        <authorList>
            <person name="Matsuyama A."/>
            <person name="Arai R."/>
            <person name="Yashiroda Y."/>
            <person name="Shirai A."/>
            <person name="Kamata A."/>
            <person name="Sekido S."/>
            <person name="Kobayashi Y."/>
            <person name="Hashimoto A."/>
            <person name="Hamamoto M."/>
            <person name="Hiraoka Y."/>
            <person name="Horinouchi S."/>
            <person name="Yoshida M."/>
        </authorList>
    </citation>
    <scope>SUBCELLULAR LOCATION [LARGE SCALE ANALYSIS]</scope>
</reference>
<reference key="5">
    <citation type="journal article" date="2008" name="J. Proteome Res.">
        <title>Phosphoproteome analysis of fission yeast.</title>
        <authorList>
            <person name="Wilson-Grady J.T."/>
            <person name="Villen J."/>
            <person name="Gygi S.P."/>
        </authorList>
    </citation>
    <scope>PHOSPHORYLATION [LARGE SCALE ANALYSIS] AT THR-343 AND SER-392</scope>
    <scope>IDENTIFICATION BY MASS SPECTROMETRY</scope>
</reference>
<dbReference type="EMBL" id="CU329672">
    <property type="protein sequence ID" value="CAB40004.1"/>
    <property type="molecule type" value="Genomic_DNA"/>
</dbReference>
<dbReference type="EMBL" id="AB027984">
    <property type="protein sequence ID" value="BAA87288.1"/>
    <property type="molecule type" value="Genomic_DNA"/>
</dbReference>
<dbReference type="PIR" id="T41207">
    <property type="entry name" value="T41207"/>
</dbReference>
<dbReference type="RefSeq" id="NP_588277.1">
    <property type="nucleotide sequence ID" value="NM_001023267.3"/>
</dbReference>
<dbReference type="SMR" id="Q9Y7P6"/>
<dbReference type="BioGRID" id="275899">
    <property type="interactions" value="8"/>
</dbReference>
<dbReference type="FunCoup" id="Q9Y7P6">
    <property type="interactions" value="369"/>
</dbReference>
<dbReference type="STRING" id="284812.Q9Y7P6"/>
<dbReference type="iPTMnet" id="Q9Y7P6"/>
<dbReference type="PaxDb" id="4896-SPCC1902.02.1"/>
<dbReference type="EnsemblFungi" id="SPCC1902.02.1">
    <property type="protein sequence ID" value="SPCC1902.02.1:pep"/>
    <property type="gene ID" value="SPCC1902.02"/>
</dbReference>
<dbReference type="GeneID" id="2539333"/>
<dbReference type="KEGG" id="spo:2539333"/>
<dbReference type="PomBase" id="SPCC1902.02">
    <property type="gene designation" value="mug72"/>
</dbReference>
<dbReference type="VEuPathDB" id="FungiDB:SPCC1902.02"/>
<dbReference type="eggNOG" id="ENOG502QT3Z">
    <property type="taxonomic scope" value="Eukaryota"/>
</dbReference>
<dbReference type="HOGENOM" id="CLU_471855_0_0_1"/>
<dbReference type="InParanoid" id="Q9Y7P6"/>
<dbReference type="OMA" id="STKWKPD"/>
<dbReference type="PhylomeDB" id="Q9Y7P6"/>
<dbReference type="PRO" id="PR:Q9Y7P6"/>
<dbReference type="Proteomes" id="UP000002485">
    <property type="component" value="Chromosome III"/>
</dbReference>
<dbReference type="GO" id="GO:0032153">
    <property type="term" value="C:cell division site"/>
    <property type="evidence" value="ECO:0007005"/>
    <property type="project" value="PomBase"/>
</dbReference>
<dbReference type="GO" id="GO:0051286">
    <property type="term" value="C:cell tip"/>
    <property type="evidence" value="ECO:0007005"/>
    <property type="project" value="PomBase"/>
</dbReference>
<dbReference type="GO" id="GO:0005737">
    <property type="term" value="C:cytoplasm"/>
    <property type="evidence" value="ECO:0007005"/>
    <property type="project" value="PomBase"/>
</dbReference>
<dbReference type="GO" id="GO:0051321">
    <property type="term" value="P:meiotic cell cycle"/>
    <property type="evidence" value="ECO:0007669"/>
    <property type="project" value="UniProtKB-KW"/>
</dbReference>
<dbReference type="FunFam" id="1.10.1040.10:FF:000017">
    <property type="entry name" value="2-dehydropantoate 2-reductase"/>
    <property type="match status" value="1"/>
</dbReference>
<dbReference type="FunFam" id="3.40.50.720:FF:000424">
    <property type="entry name" value="Meiotically up-regulated gene 72 protein"/>
    <property type="match status" value="1"/>
</dbReference>
<dbReference type="Gene3D" id="1.10.1040.10">
    <property type="entry name" value="N-(1-d-carboxylethyl)-l-norvaline Dehydrogenase, domain 2"/>
    <property type="match status" value="1"/>
</dbReference>
<dbReference type="Gene3D" id="3.40.50.720">
    <property type="entry name" value="NAD(P)-binding Rossmann-like Domain"/>
    <property type="match status" value="1"/>
</dbReference>
<dbReference type="InterPro" id="IPR008927">
    <property type="entry name" value="6-PGluconate_DH-like_C_sf"/>
</dbReference>
<dbReference type="InterPro" id="IPR013328">
    <property type="entry name" value="6PGD_dom2"/>
</dbReference>
<dbReference type="InterPro" id="IPR013752">
    <property type="entry name" value="KPA_reductase"/>
</dbReference>
<dbReference type="InterPro" id="IPR051402">
    <property type="entry name" value="KPR-Related"/>
</dbReference>
<dbReference type="InterPro" id="IPR013332">
    <property type="entry name" value="KPR_N"/>
</dbReference>
<dbReference type="PANTHER" id="PTHR21708:SF44">
    <property type="entry name" value="MEIOTICALLY UP-REGULATED GENE 72 PROTEIN"/>
    <property type="match status" value="1"/>
</dbReference>
<dbReference type="PANTHER" id="PTHR21708">
    <property type="entry name" value="PROBABLE 2-DEHYDROPANTOATE 2-REDUCTASE"/>
    <property type="match status" value="1"/>
</dbReference>
<dbReference type="Pfam" id="PF02558">
    <property type="entry name" value="ApbA"/>
    <property type="match status" value="1"/>
</dbReference>
<dbReference type="Pfam" id="PF08546">
    <property type="entry name" value="ApbA_C"/>
    <property type="match status" value="1"/>
</dbReference>
<dbReference type="SUPFAM" id="SSF48179">
    <property type="entry name" value="6-phosphogluconate dehydrogenase C-terminal domain-like"/>
    <property type="match status" value="1"/>
</dbReference>
<accession>Q9Y7P6</accession>
<accession>Q9UTU8</accession>
<feature type="chain" id="PRO_0000116550" description="Meiotically up-regulated gene 72 protein">
    <location>
        <begin position="1"/>
        <end position="574"/>
    </location>
</feature>
<feature type="region of interest" description="Disordered" evidence="1">
    <location>
        <begin position="339"/>
        <end position="374"/>
    </location>
</feature>
<feature type="region of interest" description="Disordered" evidence="1">
    <location>
        <begin position="422"/>
        <end position="451"/>
    </location>
</feature>
<feature type="region of interest" description="Disordered" evidence="1">
    <location>
        <begin position="495"/>
        <end position="574"/>
    </location>
</feature>
<feature type="compositionally biased region" description="Polar residues" evidence="1">
    <location>
        <begin position="364"/>
        <end position="374"/>
    </location>
</feature>
<feature type="compositionally biased region" description="Polar residues" evidence="1">
    <location>
        <begin position="541"/>
        <end position="554"/>
    </location>
</feature>
<feature type="modified residue" description="Phosphothreonine" evidence="5">
    <location>
        <position position="343"/>
    </location>
</feature>
<feature type="modified residue" description="Phosphoserine" evidence="5">
    <location>
        <position position="392"/>
    </location>
</feature>
<feature type="sequence conflict" description="In Ref. 2." evidence="6" ref="2">
    <original>PVGAASR</original>
    <variation>SGCLPHG</variation>
    <location>
        <begin position="358"/>
        <end position="364"/>
    </location>
</feature>
<gene>
    <name type="primary">mug72</name>
    <name type="ORF">SPCC1902.02</name>
    <name type="ORF">SPCC663.16c</name>
</gene>
<protein>
    <recommendedName>
        <fullName>Meiotically up-regulated gene 72 protein</fullName>
    </recommendedName>
</protein>
<name>MUG72_SCHPO</name>